<keyword id="KW-0238">DNA-binding</keyword>
<keyword id="KW-0479">Metal-binding</keyword>
<keyword id="KW-0539">Nucleus</keyword>
<keyword id="KW-0675">Receptor</keyword>
<keyword id="KW-1185">Reference proteome</keyword>
<keyword id="KW-0804">Transcription</keyword>
<keyword id="KW-0805">Transcription regulation</keyword>
<keyword id="KW-0862">Zinc</keyword>
<keyword id="KW-0863">Zinc-finger</keyword>
<organism>
    <name type="scientific">Caenorhabditis elegans</name>
    <dbReference type="NCBI Taxonomy" id="6239"/>
    <lineage>
        <taxon>Eukaryota</taxon>
        <taxon>Metazoa</taxon>
        <taxon>Ecdysozoa</taxon>
        <taxon>Nematoda</taxon>
        <taxon>Chromadorea</taxon>
        <taxon>Rhabditida</taxon>
        <taxon>Rhabditina</taxon>
        <taxon>Rhabditomorpha</taxon>
        <taxon>Rhabditoidea</taxon>
        <taxon>Rhabditidae</taxon>
        <taxon>Peloderinae</taxon>
        <taxon>Caenorhabditis</taxon>
    </lineage>
</organism>
<dbReference type="EMBL" id="FO080150">
    <property type="protein sequence ID" value="CCD61620.1"/>
    <property type="molecule type" value="Genomic_DNA"/>
</dbReference>
<dbReference type="PIR" id="T27857">
    <property type="entry name" value="T27857"/>
</dbReference>
<dbReference type="RefSeq" id="NP_498550.1">
    <property type="nucleotide sequence ID" value="NM_066149.2"/>
</dbReference>
<dbReference type="SMR" id="Q23489"/>
<dbReference type="BioGRID" id="56214">
    <property type="interactions" value="3"/>
</dbReference>
<dbReference type="FunCoup" id="Q23489">
    <property type="interactions" value="11"/>
</dbReference>
<dbReference type="STRING" id="6239.ZK418.1.1"/>
<dbReference type="PaxDb" id="6239-ZK418.1"/>
<dbReference type="EnsemblMetazoa" id="ZK418.1.1">
    <property type="protein sequence ID" value="ZK418.1.1"/>
    <property type="gene ID" value="WBGene00003608"/>
</dbReference>
<dbReference type="GeneID" id="191718"/>
<dbReference type="KEGG" id="cel:CELE_ZK418.1"/>
<dbReference type="UCSC" id="ZK418.1">
    <property type="organism name" value="c. elegans"/>
</dbReference>
<dbReference type="AGR" id="WB:WBGene00003608"/>
<dbReference type="CTD" id="191718"/>
<dbReference type="WormBase" id="ZK418.1">
    <property type="protein sequence ID" value="CE00731"/>
    <property type="gene ID" value="WBGene00003608"/>
    <property type="gene designation" value="nhr-9"/>
</dbReference>
<dbReference type="eggNOG" id="ENOG502TG42">
    <property type="taxonomic scope" value="Eukaryota"/>
</dbReference>
<dbReference type="GeneTree" id="ENSGT00970000195839"/>
<dbReference type="HOGENOM" id="CLU_007368_3_0_1"/>
<dbReference type="InParanoid" id="Q23489"/>
<dbReference type="OMA" id="EWGFMEQ"/>
<dbReference type="OrthoDB" id="10018779at2759"/>
<dbReference type="PhylomeDB" id="Q23489"/>
<dbReference type="PRO" id="PR:Q23489"/>
<dbReference type="Proteomes" id="UP000001940">
    <property type="component" value="Chromosome III"/>
</dbReference>
<dbReference type="GO" id="GO:0005634">
    <property type="term" value="C:nucleus"/>
    <property type="evidence" value="ECO:0007669"/>
    <property type="project" value="UniProtKB-SubCell"/>
</dbReference>
<dbReference type="GO" id="GO:0003700">
    <property type="term" value="F:DNA-binding transcription factor activity"/>
    <property type="evidence" value="ECO:0007669"/>
    <property type="project" value="InterPro"/>
</dbReference>
<dbReference type="GO" id="GO:0043565">
    <property type="term" value="F:sequence-specific DNA binding"/>
    <property type="evidence" value="ECO:0007669"/>
    <property type="project" value="InterPro"/>
</dbReference>
<dbReference type="GO" id="GO:0008270">
    <property type="term" value="F:zinc ion binding"/>
    <property type="evidence" value="ECO:0007669"/>
    <property type="project" value="UniProtKB-KW"/>
</dbReference>
<dbReference type="Gene3D" id="3.30.50.10">
    <property type="entry name" value="Erythroid Transcription Factor GATA-1, subunit A"/>
    <property type="match status" value="1"/>
</dbReference>
<dbReference type="Gene3D" id="1.10.565.10">
    <property type="entry name" value="Retinoid X Receptor"/>
    <property type="match status" value="1"/>
</dbReference>
<dbReference type="InterPro" id="IPR035500">
    <property type="entry name" value="NHR-like_dom_sf"/>
</dbReference>
<dbReference type="InterPro" id="IPR000536">
    <property type="entry name" value="Nucl_hrmn_rcpt_lig-bd"/>
</dbReference>
<dbReference type="InterPro" id="IPR001628">
    <property type="entry name" value="Znf_hrmn_rcpt"/>
</dbReference>
<dbReference type="InterPro" id="IPR013088">
    <property type="entry name" value="Znf_NHR/GATA"/>
</dbReference>
<dbReference type="PANTHER" id="PTHR45886:SF17">
    <property type="entry name" value="NUCLEAR HORMONE RECEPTOR FAMILY MEMBER NHR-9"/>
    <property type="match status" value="1"/>
</dbReference>
<dbReference type="PANTHER" id="PTHR45886">
    <property type="entry name" value="NUCLEAR HORMONE RECEPTOR FAMILY-RELATED-RELATED"/>
    <property type="match status" value="1"/>
</dbReference>
<dbReference type="Pfam" id="PF00104">
    <property type="entry name" value="Hormone_recep"/>
    <property type="match status" value="1"/>
</dbReference>
<dbReference type="Pfam" id="PF00105">
    <property type="entry name" value="zf-C4"/>
    <property type="match status" value="1"/>
</dbReference>
<dbReference type="PRINTS" id="PR00047">
    <property type="entry name" value="STROIDFINGER"/>
</dbReference>
<dbReference type="SMART" id="SM00430">
    <property type="entry name" value="HOLI"/>
    <property type="match status" value="1"/>
</dbReference>
<dbReference type="SMART" id="SM00399">
    <property type="entry name" value="ZnF_C4"/>
    <property type="match status" value="1"/>
</dbReference>
<dbReference type="SUPFAM" id="SSF57716">
    <property type="entry name" value="Glucocorticoid receptor-like (DNA-binding domain)"/>
    <property type="match status" value="1"/>
</dbReference>
<dbReference type="SUPFAM" id="SSF48508">
    <property type="entry name" value="Nuclear receptor ligand-binding domain"/>
    <property type="match status" value="1"/>
</dbReference>
<dbReference type="PROSITE" id="PS51843">
    <property type="entry name" value="NR_LBD"/>
    <property type="match status" value="1"/>
</dbReference>
<dbReference type="PROSITE" id="PS00031">
    <property type="entry name" value="NUCLEAR_REC_DBD_1"/>
    <property type="match status" value="1"/>
</dbReference>
<dbReference type="PROSITE" id="PS51030">
    <property type="entry name" value="NUCLEAR_REC_DBD_2"/>
    <property type="match status" value="1"/>
</dbReference>
<sequence length="332" mass="38248">MITQIGSTSSERRCAICSKLGNSYNYGVLSCNACKMFFRRATLGKSEKFCINNDNCDTSNLILTCRQCRYNKCLKMGMRIVTNQYDSLDDIIKVLAKWNLDRSNKLMNFQCFEDPTLDQVIQKHPVFTKKPSNLSFSKSEWGFMEQLTTVEFMSKFEFTRHLFSEDFRIVLKSSCFKIASFIKAVRSYSMKKEDIRYPDGELIVPMELVPFCTSEFLARVQCRLIGRIIELKLKEEEFLLLIAIFVCDPTANNLTARGREILSFHQNVYNDALLQLCLRNEGSCGPARFNDLLSVCHVVNKHVEDIGQLCFMFSFHPPTTKYKRLCAELLGA</sequence>
<evidence type="ECO:0000255" key="1">
    <source>
        <dbReference type="PROSITE-ProRule" id="PRU00407"/>
    </source>
</evidence>
<evidence type="ECO:0000255" key="2">
    <source>
        <dbReference type="PROSITE-ProRule" id="PRU01189"/>
    </source>
</evidence>
<evidence type="ECO:0000305" key="3"/>
<feature type="chain" id="PRO_0000053762" description="Nuclear hormone receptor family member nhr-9">
    <location>
        <begin position="1"/>
        <end position="332"/>
    </location>
</feature>
<feature type="domain" description="NR LBD" evidence="2">
    <location>
        <begin position="101"/>
        <end position="332"/>
    </location>
</feature>
<feature type="DNA-binding region" description="Nuclear receptor" evidence="1">
    <location>
        <begin position="11"/>
        <end position="85"/>
    </location>
</feature>
<feature type="zinc finger region" description="NR C4-type" evidence="1">
    <location>
        <begin position="14"/>
        <end position="34"/>
    </location>
</feature>
<feature type="zinc finger region" description="NR C4-type" evidence="1">
    <location>
        <begin position="50"/>
        <end position="73"/>
    </location>
</feature>
<proteinExistence type="inferred from homology"/>
<accession>Q23489</accession>
<name>NHR9_CAEEL</name>
<reference key="1">
    <citation type="journal article" date="1998" name="Science">
        <title>Genome sequence of the nematode C. elegans: a platform for investigating biology.</title>
        <authorList>
            <consortium name="The C. elegans sequencing consortium"/>
        </authorList>
    </citation>
    <scope>NUCLEOTIDE SEQUENCE [LARGE SCALE GENOMIC DNA]</scope>
    <source>
        <strain>Bristol N2</strain>
    </source>
</reference>
<comment type="function">
    <text>Orphan nuclear receptor.</text>
</comment>
<comment type="subcellular location">
    <subcellularLocation>
        <location evidence="1">Nucleus</location>
    </subcellularLocation>
</comment>
<comment type="similarity">
    <text evidence="3">Belongs to the nuclear hormone receptor family.</text>
</comment>
<gene>
    <name type="primary">nhr-9</name>
    <name type="ORF">ZK418.1</name>
</gene>
<protein>
    <recommendedName>
        <fullName>Nuclear hormone receptor family member nhr-9</fullName>
    </recommendedName>
</protein>